<comment type="function">
    <text evidence="1">Necessary for the introduction of cis unsaturation into fatty acids. Catalyzes the dehydration of (3R)-3-hydroxydecanoyl-ACP to E-(2)-decenoyl-ACP and then its isomerization to Z-(3)-decenoyl-ACP. Can catalyze the dehydratase reaction for beta-hydroxyacyl-ACPs with saturated chain lengths up to 16:0, being most active on intermediate chain length.</text>
</comment>
<comment type="catalytic activity">
    <reaction evidence="1">
        <text>a (3R)-hydroxyacyl-[ACP] = a (2E)-enoyl-[ACP] + H2O</text>
        <dbReference type="Rhea" id="RHEA:13097"/>
        <dbReference type="Rhea" id="RHEA-COMP:9925"/>
        <dbReference type="Rhea" id="RHEA-COMP:9945"/>
        <dbReference type="ChEBI" id="CHEBI:15377"/>
        <dbReference type="ChEBI" id="CHEBI:78784"/>
        <dbReference type="ChEBI" id="CHEBI:78827"/>
        <dbReference type="EC" id="4.2.1.59"/>
    </reaction>
</comment>
<comment type="catalytic activity">
    <reaction evidence="1">
        <text>(3R)-hydroxydecanoyl-[ACP] = (2E)-decenoyl-[ACP] + H2O</text>
        <dbReference type="Rhea" id="RHEA:41860"/>
        <dbReference type="Rhea" id="RHEA-COMP:9638"/>
        <dbReference type="Rhea" id="RHEA-COMP:9639"/>
        <dbReference type="ChEBI" id="CHEBI:15377"/>
        <dbReference type="ChEBI" id="CHEBI:78466"/>
        <dbReference type="ChEBI" id="CHEBI:78467"/>
    </reaction>
</comment>
<comment type="catalytic activity">
    <reaction evidence="1">
        <text>(2E)-decenoyl-[ACP] = (3Z)-decenoyl-[ACP]</text>
        <dbReference type="Rhea" id="RHEA:23568"/>
        <dbReference type="Rhea" id="RHEA-COMP:9639"/>
        <dbReference type="Rhea" id="RHEA-COMP:9927"/>
        <dbReference type="ChEBI" id="CHEBI:78467"/>
        <dbReference type="ChEBI" id="CHEBI:78798"/>
        <dbReference type="EC" id="5.3.3.14"/>
    </reaction>
</comment>
<comment type="pathway">
    <text evidence="1">Lipid metabolism; fatty acid biosynthesis.</text>
</comment>
<comment type="subunit">
    <text evidence="1">Homodimer.</text>
</comment>
<comment type="subcellular location">
    <subcellularLocation>
        <location evidence="1">Cytoplasm</location>
    </subcellularLocation>
</comment>
<comment type="similarity">
    <text evidence="1">Belongs to the thioester dehydratase family. FabA subfamily.</text>
</comment>
<accession>Q3J9C3</accession>
<dbReference type="EC" id="4.2.1.59" evidence="1"/>
<dbReference type="EC" id="5.3.3.14" evidence="1"/>
<dbReference type="EMBL" id="CP000127">
    <property type="protein sequence ID" value="ABA58573.1"/>
    <property type="molecule type" value="Genomic_DNA"/>
</dbReference>
<dbReference type="RefSeq" id="WP_011330863.1">
    <property type="nucleotide sequence ID" value="NC_007484.1"/>
</dbReference>
<dbReference type="SMR" id="Q3J9C3"/>
<dbReference type="FunCoup" id="Q3J9C3">
    <property type="interactions" value="167"/>
</dbReference>
<dbReference type="STRING" id="323261.Noc_2113"/>
<dbReference type="KEGG" id="noc:Noc_2113"/>
<dbReference type="eggNOG" id="COG0764">
    <property type="taxonomic scope" value="Bacteria"/>
</dbReference>
<dbReference type="HOGENOM" id="CLU_097925_0_0_6"/>
<dbReference type="InParanoid" id="Q3J9C3"/>
<dbReference type="UniPathway" id="UPA00094"/>
<dbReference type="Proteomes" id="UP000006838">
    <property type="component" value="Chromosome"/>
</dbReference>
<dbReference type="GO" id="GO:0005737">
    <property type="term" value="C:cytoplasm"/>
    <property type="evidence" value="ECO:0007669"/>
    <property type="project" value="UniProtKB-SubCell"/>
</dbReference>
<dbReference type="GO" id="GO:0019171">
    <property type="term" value="F:(3R)-hydroxyacyl-[acyl-carrier-protein] dehydratase activity"/>
    <property type="evidence" value="ECO:0007669"/>
    <property type="project" value="UniProtKB-UniRule"/>
</dbReference>
<dbReference type="GO" id="GO:0034017">
    <property type="term" value="F:trans-2-decenoyl-acyl-carrier-protein isomerase activity"/>
    <property type="evidence" value="ECO:0007669"/>
    <property type="project" value="UniProtKB-UniRule"/>
</dbReference>
<dbReference type="GO" id="GO:0006636">
    <property type="term" value="P:unsaturated fatty acid biosynthetic process"/>
    <property type="evidence" value="ECO:0007669"/>
    <property type="project" value="UniProtKB-UniRule"/>
</dbReference>
<dbReference type="CDD" id="cd01287">
    <property type="entry name" value="FabA"/>
    <property type="match status" value="1"/>
</dbReference>
<dbReference type="Gene3D" id="3.10.129.10">
    <property type="entry name" value="Hotdog Thioesterase"/>
    <property type="match status" value="1"/>
</dbReference>
<dbReference type="HAMAP" id="MF_00405">
    <property type="entry name" value="FabA"/>
    <property type="match status" value="1"/>
</dbReference>
<dbReference type="InterPro" id="IPR010083">
    <property type="entry name" value="FabA"/>
</dbReference>
<dbReference type="InterPro" id="IPR013114">
    <property type="entry name" value="FabA_FabZ"/>
</dbReference>
<dbReference type="InterPro" id="IPR029069">
    <property type="entry name" value="HotDog_dom_sf"/>
</dbReference>
<dbReference type="NCBIfam" id="TIGR01749">
    <property type="entry name" value="fabA"/>
    <property type="match status" value="1"/>
</dbReference>
<dbReference type="NCBIfam" id="NF003509">
    <property type="entry name" value="PRK05174.1"/>
    <property type="match status" value="1"/>
</dbReference>
<dbReference type="PANTHER" id="PTHR30272">
    <property type="entry name" value="3-HYDROXYACYL-[ACYL-CARRIER-PROTEIN] DEHYDRATASE"/>
    <property type="match status" value="1"/>
</dbReference>
<dbReference type="PANTHER" id="PTHR30272:SF8">
    <property type="entry name" value="3-HYDROXYDECANOYL-[ACYL-CARRIER-PROTEIN] DEHYDRATASE"/>
    <property type="match status" value="1"/>
</dbReference>
<dbReference type="Pfam" id="PF07977">
    <property type="entry name" value="FabA"/>
    <property type="match status" value="1"/>
</dbReference>
<dbReference type="SUPFAM" id="SSF54637">
    <property type="entry name" value="Thioesterase/thiol ester dehydrase-isomerase"/>
    <property type="match status" value="1"/>
</dbReference>
<sequence>MIRPSAFSYEDLLQCGRGEMFGPGNAQLPMPPMLMFDRITYISDEGGAFGKGEINAEMEIKPDSWFFNCHFPSDPVMPGCLGLDAMWQLLGFYLAWRGGPGHGRALGSGEVKFTGQVTPKNKLVTYHINLKRVIMRKLVMGIADGIMAVDGREIYLAKDLRVGLFVSTDSF</sequence>
<organism>
    <name type="scientific">Nitrosococcus oceani (strain ATCC 19707 / BCRC 17464 / JCM 30415 / NCIMB 11848 / C-107)</name>
    <dbReference type="NCBI Taxonomy" id="323261"/>
    <lineage>
        <taxon>Bacteria</taxon>
        <taxon>Pseudomonadati</taxon>
        <taxon>Pseudomonadota</taxon>
        <taxon>Gammaproteobacteria</taxon>
        <taxon>Chromatiales</taxon>
        <taxon>Chromatiaceae</taxon>
        <taxon>Nitrosococcus</taxon>
    </lineage>
</organism>
<feature type="chain" id="PRO_0000267738" description="3-hydroxydecanoyl-[acyl-carrier-protein] dehydratase">
    <location>
        <begin position="1"/>
        <end position="171"/>
    </location>
</feature>
<feature type="active site" evidence="1">
    <location>
        <position position="70"/>
    </location>
</feature>
<keyword id="KW-0963">Cytoplasm</keyword>
<keyword id="KW-0275">Fatty acid biosynthesis</keyword>
<keyword id="KW-0276">Fatty acid metabolism</keyword>
<keyword id="KW-0413">Isomerase</keyword>
<keyword id="KW-0444">Lipid biosynthesis</keyword>
<keyword id="KW-0443">Lipid metabolism</keyword>
<keyword id="KW-0456">Lyase</keyword>
<keyword id="KW-1185">Reference proteome</keyword>
<evidence type="ECO:0000255" key="1">
    <source>
        <dbReference type="HAMAP-Rule" id="MF_00405"/>
    </source>
</evidence>
<reference key="1">
    <citation type="journal article" date="2006" name="Appl. Environ. Microbiol.">
        <title>Complete genome sequence of the marine, chemolithoautotrophic, ammonia-oxidizing bacterium Nitrosococcus oceani ATCC 19707.</title>
        <authorList>
            <person name="Klotz M.G."/>
            <person name="Arp D.J."/>
            <person name="Chain P.S.G."/>
            <person name="El-Sheikh A.F."/>
            <person name="Hauser L.J."/>
            <person name="Hommes N.G."/>
            <person name="Larimer F.W."/>
            <person name="Malfatti S.A."/>
            <person name="Norton J.M."/>
            <person name="Poret-Peterson A.T."/>
            <person name="Vergez L.M."/>
            <person name="Ward B.B."/>
        </authorList>
    </citation>
    <scope>NUCLEOTIDE SEQUENCE [LARGE SCALE GENOMIC DNA]</scope>
    <source>
        <strain>ATCC 19707 / BCRC 17464 / JCM 30415 / NCIMB 11848 / C-107</strain>
    </source>
</reference>
<protein>
    <recommendedName>
        <fullName evidence="1">3-hydroxydecanoyl-[acyl-carrier-protein] dehydratase</fullName>
        <ecNumber evidence="1">4.2.1.59</ecNumber>
    </recommendedName>
    <alternativeName>
        <fullName evidence="1">3-hydroxyacyl-[acyl-carrier-protein] dehydratase FabA</fullName>
    </alternativeName>
    <alternativeName>
        <fullName evidence="1">Beta-hydroxydecanoyl thioester dehydrase</fullName>
    </alternativeName>
    <alternativeName>
        <fullName evidence="1">Trans-2-decenoyl-[acyl-carrier-protein] isomerase</fullName>
        <ecNumber evidence="1">5.3.3.14</ecNumber>
    </alternativeName>
</protein>
<gene>
    <name evidence="1" type="primary">fabA</name>
    <name type="ordered locus">Noc_2113</name>
</gene>
<proteinExistence type="inferred from homology"/>
<name>FABA_NITOC</name>